<sequence length="667" mass="72549">MDILRVLSRGIKPNPKSKAQAGGATTQLPSAGALPRPQLFHDPVGSRGKKRKRRRGAQDDEPEGDDQELSDVDYFAPKKAAPEAAPTDVEESPKKRKIKLLDEDECRQILRSHRLKLTILSDQPQAEAKTEAEEPASKKKSSKKKKKETEGKDKKDKKDEHKKQIFPQPLTSFGELRHTYDVSPQLAANIAAQGFRVPTEVQMASLPLLLQPTTALKKSEGADIPNIDNGADFLAVAPTGSGKTITFLIPAIDGVLRRRAEEGRDTDQHVLEAVVVAPTRELATQIVNEGRKLAIGTGVRVVLMKRALKLDVEEVADEKSKDLEEGSGSEQGSGDEESEGEEESEGEEGKTSKEAKPLARVDILVTTPKILLNFLSGKAGARRLLPSVRSLILDEADVLLDPLFRKQTMAICRACTHPNVALTCWSATMASNVEALVTKHLLQARQEDRQPTPALHDELKYDIPLEAGGSARVAVLHSSMADSARSKIMARFRAGEVWVLVTTDVLARGVDFAGVNGVVNYDVPTSAAAYVHRAGRTGRAGREGGVAVTFYTKDDIPFVKSVANVIAASEKQAGVQADGGGGGTVQKWLLDALPKVAKEDKRKLKVRGVESRRTGGKATITTKSSWERRREHNRAQAVEASKRRKRQRREEGPAAGEAEGEWGGLED</sequence>
<reference key="1">
    <citation type="journal article" date="2015" name="Genome Announc.">
        <title>Draft genome sequence of the cellulolytic fungus Chaetomium globosum.</title>
        <authorList>
            <person name="Cuomo C.A."/>
            <person name="Untereiner W.A."/>
            <person name="Ma L.-J."/>
            <person name="Grabherr M."/>
            <person name="Birren B.W."/>
        </authorList>
    </citation>
    <scope>NUCLEOTIDE SEQUENCE [LARGE SCALE GENOMIC DNA]</scope>
    <source>
        <strain>ATCC 6205 / CBS 148.51 / DSM 1962 / NBRC 6347 / NRRL 1970</strain>
    </source>
</reference>
<protein>
    <recommendedName>
        <fullName>ATP-dependent RNA helicase ROK1</fullName>
        <ecNumber>3.6.4.13</ecNumber>
    </recommendedName>
</protein>
<comment type="function">
    <text>ATP-dependent RNA helicase involved in 40S ribosomal subunit biogenesis. Required for the processing and cleavage of 35S pre-rRNA at sites A0, A1, and A2, leading to mature 18S rRNA.</text>
</comment>
<comment type="catalytic activity">
    <reaction>
        <text>ATP + H2O = ADP + phosphate + H(+)</text>
        <dbReference type="Rhea" id="RHEA:13065"/>
        <dbReference type="ChEBI" id="CHEBI:15377"/>
        <dbReference type="ChEBI" id="CHEBI:15378"/>
        <dbReference type="ChEBI" id="CHEBI:30616"/>
        <dbReference type="ChEBI" id="CHEBI:43474"/>
        <dbReference type="ChEBI" id="CHEBI:456216"/>
        <dbReference type="EC" id="3.6.4.13"/>
    </reaction>
</comment>
<comment type="subunit">
    <text evidence="1">Interacts with the U3 snoRNA and is associated with the 90S and 40S pre-ribosomes.</text>
</comment>
<comment type="subcellular location">
    <subcellularLocation>
        <location evidence="1">Nucleus</location>
        <location evidence="1">Nucleolus</location>
    </subcellularLocation>
</comment>
<comment type="domain">
    <text>The Q motif is unique to and characteristic of the DEAD box family of RNA helicases and controls ATP binding and hydrolysis.</text>
</comment>
<comment type="similarity">
    <text evidence="4">Belongs to the DEAD box helicase family. DDX52/ROK1 subfamily.</text>
</comment>
<proteinExistence type="inferred from homology"/>
<name>ROK1_CHAGB</name>
<gene>
    <name type="primary">ROK1</name>
    <name type="ORF">CHGG_01947</name>
</gene>
<keyword id="KW-0067">ATP-binding</keyword>
<keyword id="KW-0347">Helicase</keyword>
<keyword id="KW-0378">Hydrolase</keyword>
<keyword id="KW-0547">Nucleotide-binding</keyword>
<keyword id="KW-0539">Nucleus</keyword>
<keyword id="KW-1185">Reference proteome</keyword>
<keyword id="KW-0690">Ribosome biogenesis</keyword>
<keyword id="KW-0694">RNA-binding</keyword>
<keyword id="KW-0698">rRNA processing</keyword>
<feature type="chain" id="PRO_0000256042" description="ATP-dependent RNA helicase ROK1">
    <location>
        <begin position="1"/>
        <end position="667"/>
    </location>
</feature>
<feature type="domain" description="Helicase ATP-binding" evidence="2">
    <location>
        <begin position="224"/>
        <end position="447"/>
    </location>
</feature>
<feature type="domain" description="Helicase C-terminal">
    <location>
        <begin position="432"/>
        <end position="581"/>
    </location>
</feature>
<feature type="region of interest" description="Disordered" evidence="3">
    <location>
        <begin position="1"/>
        <end position="99"/>
    </location>
</feature>
<feature type="region of interest" description="Disordered" evidence="3">
    <location>
        <begin position="121"/>
        <end position="170"/>
    </location>
</feature>
<feature type="region of interest" description="Disordered" evidence="3">
    <location>
        <begin position="318"/>
        <end position="355"/>
    </location>
</feature>
<feature type="region of interest" description="Disordered" evidence="3">
    <location>
        <begin position="608"/>
        <end position="667"/>
    </location>
</feature>
<feature type="short sequence motif" description="Q motif">
    <location>
        <begin position="175"/>
        <end position="203"/>
    </location>
</feature>
<feature type="short sequence motif" description="DEAD box">
    <location>
        <begin position="394"/>
        <end position="397"/>
    </location>
</feature>
<feature type="compositionally biased region" description="Acidic residues" evidence="3">
    <location>
        <begin position="59"/>
        <end position="71"/>
    </location>
</feature>
<feature type="compositionally biased region" description="Low complexity" evidence="3">
    <location>
        <begin position="77"/>
        <end position="86"/>
    </location>
</feature>
<feature type="compositionally biased region" description="Basic and acidic residues" evidence="3">
    <location>
        <begin position="128"/>
        <end position="137"/>
    </location>
</feature>
<feature type="compositionally biased region" description="Basic and acidic residues" evidence="3">
    <location>
        <begin position="147"/>
        <end position="163"/>
    </location>
</feature>
<feature type="compositionally biased region" description="Acidic residues" evidence="3">
    <location>
        <begin position="333"/>
        <end position="346"/>
    </location>
</feature>
<feature type="compositionally biased region" description="Basic and acidic residues" evidence="3">
    <location>
        <begin position="625"/>
        <end position="634"/>
    </location>
</feature>
<feature type="compositionally biased region" description="Acidic residues" evidence="3">
    <location>
        <begin position="658"/>
        <end position="667"/>
    </location>
</feature>
<feature type="binding site" evidence="2">
    <location>
        <begin position="237"/>
        <end position="244"/>
    </location>
    <ligand>
        <name>ATP</name>
        <dbReference type="ChEBI" id="CHEBI:30616"/>
    </ligand>
</feature>
<organism>
    <name type="scientific">Chaetomium globosum (strain ATCC 6205 / CBS 148.51 / DSM 1962 / NBRC 6347 / NRRL 1970)</name>
    <name type="common">Soil fungus</name>
    <dbReference type="NCBI Taxonomy" id="306901"/>
    <lineage>
        <taxon>Eukaryota</taxon>
        <taxon>Fungi</taxon>
        <taxon>Dikarya</taxon>
        <taxon>Ascomycota</taxon>
        <taxon>Pezizomycotina</taxon>
        <taxon>Sordariomycetes</taxon>
        <taxon>Sordariomycetidae</taxon>
        <taxon>Sordariales</taxon>
        <taxon>Chaetomiaceae</taxon>
        <taxon>Chaetomium</taxon>
    </lineage>
</organism>
<accession>Q2HCV7</accession>
<dbReference type="EC" id="3.6.4.13"/>
<dbReference type="EMBL" id="CH408029">
    <property type="protein sequence ID" value="EAQ93712.1"/>
    <property type="molecule type" value="Genomic_DNA"/>
</dbReference>
<dbReference type="RefSeq" id="XP_001221168.1">
    <property type="nucleotide sequence ID" value="XM_001221167.1"/>
</dbReference>
<dbReference type="SMR" id="Q2HCV7"/>
<dbReference type="STRING" id="306901.Q2HCV7"/>
<dbReference type="GeneID" id="4387429"/>
<dbReference type="VEuPathDB" id="FungiDB:CHGG_01947"/>
<dbReference type="eggNOG" id="KOG0344">
    <property type="taxonomic scope" value="Eukaryota"/>
</dbReference>
<dbReference type="HOGENOM" id="CLU_003041_1_4_1"/>
<dbReference type="InParanoid" id="Q2HCV7"/>
<dbReference type="OMA" id="FRAGEIW"/>
<dbReference type="OrthoDB" id="360161at2759"/>
<dbReference type="Proteomes" id="UP000001056">
    <property type="component" value="Unassembled WGS sequence"/>
</dbReference>
<dbReference type="GO" id="GO:0005730">
    <property type="term" value="C:nucleolus"/>
    <property type="evidence" value="ECO:0007669"/>
    <property type="project" value="UniProtKB-SubCell"/>
</dbReference>
<dbReference type="GO" id="GO:0005524">
    <property type="term" value="F:ATP binding"/>
    <property type="evidence" value="ECO:0007669"/>
    <property type="project" value="UniProtKB-KW"/>
</dbReference>
<dbReference type="GO" id="GO:0016887">
    <property type="term" value="F:ATP hydrolysis activity"/>
    <property type="evidence" value="ECO:0007669"/>
    <property type="project" value="RHEA"/>
</dbReference>
<dbReference type="GO" id="GO:0003723">
    <property type="term" value="F:RNA binding"/>
    <property type="evidence" value="ECO:0007669"/>
    <property type="project" value="UniProtKB-KW"/>
</dbReference>
<dbReference type="GO" id="GO:0003724">
    <property type="term" value="F:RNA helicase activity"/>
    <property type="evidence" value="ECO:0007669"/>
    <property type="project" value="UniProtKB-EC"/>
</dbReference>
<dbReference type="GO" id="GO:0030490">
    <property type="term" value="P:maturation of SSU-rRNA"/>
    <property type="evidence" value="ECO:0007669"/>
    <property type="project" value="InterPro"/>
</dbReference>
<dbReference type="CDD" id="cd17957">
    <property type="entry name" value="DEADc_DDX52"/>
    <property type="match status" value="1"/>
</dbReference>
<dbReference type="CDD" id="cd18787">
    <property type="entry name" value="SF2_C_DEAD"/>
    <property type="match status" value="1"/>
</dbReference>
<dbReference type="Gene3D" id="3.40.50.300">
    <property type="entry name" value="P-loop containing nucleotide triphosphate hydrolases"/>
    <property type="match status" value="2"/>
</dbReference>
<dbReference type="InterPro" id="IPR044764">
    <property type="entry name" value="DDX52/Rok1_DEADc"/>
</dbReference>
<dbReference type="InterPro" id="IPR011545">
    <property type="entry name" value="DEAD/DEAH_box_helicase_dom"/>
</dbReference>
<dbReference type="InterPro" id="IPR014001">
    <property type="entry name" value="Helicase_ATP-bd"/>
</dbReference>
<dbReference type="InterPro" id="IPR001650">
    <property type="entry name" value="Helicase_C-like"/>
</dbReference>
<dbReference type="InterPro" id="IPR027417">
    <property type="entry name" value="P-loop_NTPase"/>
</dbReference>
<dbReference type="PANTHER" id="PTHR24031">
    <property type="entry name" value="RNA HELICASE"/>
    <property type="match status" value="1"/>
</dbReference>
<dbReference type="Pfam" id="PF00270">
    <property type="entry name" value="DEAD"/>
    <property type="match status" value="2"/>
</dbReference>
<dbReference type="Pfam" id="PF00271">
    <property type="entry name" value="Helicase_C"/>
    <property type="match status" value="1"/>
</dbReference>
<dbReference type="SMART" id="SM00487">
    <property type="entry name" value="DEXDc"/>
    <property type="match status" value="1"/>
</dbReference>
<dbReference type="SMART" id="SM00490">
    <property type="entry name" value="HELICc"/>
    <property type="match status" value="1"/>
</dbReference>
<dbReference type="SUPFAM" id="SSF52540">
    <property type="entry name" value="P-loop containing nucleoside triphosphate hydrolases"/>
    <property type="match status" value="1"/>
</dbReference>
<dbReference type="PROSITE" id="PS51192">
    <property type="entry name" value="HELICASE_ATP_BIND_1"/>
    <property type="match status" value="1"/>
</dbReference>
<dbReference type="PROSITE" id="PS51194">
    <property type="entry name" value="HELICASE_CTER"/>
    <property type="match status" value="1"/>
</dbReference>
<dbReference type="PROSITE" id="PS51195">
    <property type="entry name" value="Q_MOTIF"/>
    <property type="match status" value="1"/>
</dbReference>
<evidence type="ECO:0000250" key="1"/>
<evidence type="ECO:0000255" key="2">
    <source>
        <dbReference type="PROSITE-ProRule" id="PRU00541"/>
    </source>
</evidence>
<evidence type="ECO:0000256" key="3">
    <source>
        <dbReference type="SAM" id="MobiDB-lite"/>
    </source>
</evidence>
<evidence type="ECO:0000305" key="4"/>